<dbReference type="EMBL" id="FO080723">
    <property type="protein sequence ID" value="CCD66163.1"/>
    <property type="molecule type" value="Genomic_DNA"/>
</dbReference>
<dbReference type="EMBL" id="FO080723">
    <property type="protein sequence ID" value="CCD66164.1"/>
    <property type="molecule type" value="Genomic_DNA"/>
</dbReference>
<dbReference type="PIR" id="S44898">
    <property type="entry name" value="S44898"/>
</dbReference>
<dbReference type="RefSeq" id="NP_001040893.1">
    <property type="nucleotide sequence ID" value="NM_001047428.3"/>
</dbReference>
<dbReference type="RefSeq" id="NP_001040894.1">
    <molecule id="P34619-2"/>
    <property type="nucleotide sequence ID" value="NM_001047429.2"/>
</dbReference>
<dbReference type="BioGRID" id="41393">
    <property type="interactions" value="7"/>
</dbReference>
<dbReference type="DIP" id="DIP-27140N"/>
<dbReference type="FunCoup" id="P34619">
    <property type="interactions" value="236"/>
</dbReference>
<dbReference type="IntAct" id="P34619">
    <property type="interactions" value="1"/>
</dbReference>
<dbReference type="STRING" id="6239.ZK1236.3a.1"/>
<dbReference type="PaxDb" id="6239-ZK1236.3a"/>
<dbReference type="PeptideAtlas" id="P34619"/>
<dbReference type="EnsemblMetazoa" id="ZK1236.3a.1">
    <property type="protein sequence ID" value="ZK1236.3a.1"/>
    <property type="gene ID" value="WBGene00023405"/>
</dbReference>
<dbReference type="EnsemblMetazoa" id="ZK1236.3b.1">
    <molecule id="P34619-2"/>
    <property type="protein sequence ID" value="ZK1236.3b.1"/>
    <property type="gene ID" value="WBGene00023405"/>
</dbReference>
<dbReference type="GeneID" id="176189"/>
<dbReference type="KEGG" id="cel:CELE_ZK1236.3"/>
<dbReference type="UCSC" id="ZK1236.3a">
    <molecule id="P34619-1"/>
    <property type="organism name" value="c. elegans"/>
</dbReference>
<dbReference type="AGR" id="WB:WBGene00023405"/>
<dbReference type="CTD" id="176189"/>
<dbReference type="WormBase" id="ZK1236.3a">
    <molecule id="P34619-1"/>
    <property type="protein sequence ID" value="CE00532"/>
    <property type="gene ID" value="WBGene00023405"/>
    <property type="gene designation" value="sor-1"/>
</dbReference>
<dbReference type="WormBase" id="ZK1236.3b">
    <molecule id="P34619-2"/>
    <property type="protein sequence ID" value="CE40223"/>
    <property type="gene ID" value="WBGene00023405"/>
    <property type="gene designation" value="sor-1"/>
</dbReference>
<dbReference type="eggNOG" id="ENOG502TITC">
    <property type="taxonomic scope" value="Eukaryota"/>
</dbReference>
<dbReference type="HOGENOM" id="CLU_348247_0_0_1"/>
<dbReference type="InParanoid" id="P34619"/>
<dbReference type="OrthoDB" id="10678246at2759"/>
<dbReference type="PRO" id="PR:P34619"/>
<dbReference type="Proteomes" id="UP000001940">
    <property type="component" value="Chromosome III"/>
</dbReference>
<dbReference type="Bgee" id="WBGene00023405">
    <property type="expression patterns" value="Expressed in pharyngeal muscle cell (C elegans) and 3 other cell types or tissues"/>
</dbReference>
<dbReference type="GO" id="GO:0016604">
    <property type="term" value="C:nuclear body"/>
    <property type="evidence" value="ECO:0000314"/>
    <property type="project" value="UniProtKB"/>
</dbReference>
<dbReference type="GO" id="GO:0016607">
    <property type="term" value="C:nuclear speck"/>
    <property type="evidence" value="ECO:0000314"/>
    <property type="project" value="WormBase"/>
</dbReference>
<dbReference type="GO" id="GO:0005654">
    <property type="term" value="C:nucleoplasm"/>
    <property type="evidence" value="ECO:0000314"/>
    <property type="project" value="WormBase"/>
</dbReference>
<dbReference type="GO" id="GO:0003723">
    <property type="term" value="F:RNA binding"/>
    <property type="evidence" value="ECO:0000314"/>
    <property type="project" value="UniProtKB"/>
</dbReference>
<dbReference type="GO" id="GO:0040029">
    <property type="term" value="P:epigenetic regulation of gene expression"/>
    <property type="evidence" value="ECO:0000315"/>
    <property type="project" value="UniProtKB"/>
</dbReference>
<feature type="chain" id="PRO_0000065562" description="Sop-2-related protein 1">
    <location>
        <begin position="1"/>
        <end position="1000"/>
    </location>
</feature>
<feature type="region of interest" description="Disordered" evidence="1">
    <location>
        <begin position="355"/>
        <end position="374"/>
    </location>
</feature>
<feature type="region of interest" description="Disordered" evidence="1">
    <location>
        <begin position="379"/>
        <end position="422"/>
    </location>
</feature>
<feature type="region of interest" description="Disordered" evidence="1">
    <location>
        <begin position="466"/>
        <end position="509"/>
    </location>
</feature>
<feature type="region of interest" description="RNA-binding">
    <location>
        <begin position="633"/>
        <end position="720"/>
    </location>
</feature>
<feature type="region of interest" description="Disordered" evidence="1">
    <location>
        <begin position="948"/>
        <end position="1000"/>
    </location>
</feature>
<feature type="compositionally biased region" description="Low complexity" evidence="1">
    <location>
        <begin position="390"/>
        <end position="404"/>
    </location>
</feature>
<feature type="compositionally biased region" description="Basic and acidic residues" evidence="1">
    <location>
        <begin position="406"/>
        <end position="415"/>
    </location>
</feature>
<feature type="compositionally biased region" description="Low complexity" evidence="1">
    <location>
        <begin position="489"/>
        <end position="502"/>
    </location>
</feature>
<feature type="compositionally biased region" description="Low complexity" evidence="1">
    <location>
        <begin position="960"/>
        <end position="992"/>
    </location>
</feature>
<feature type="splice variant" id="VSP_020783" description="In isoform b." evidence="3">
    <location>
        <begin position="1"/>
        <end position="190"/>
    </location>
</feature>
<keyword id="KW-0025">Alternative splicing</keyword>
<keyword id="KW-0539">Nucleus</keyword>
<keyword id="KW-1185">Reference proteome</keyword>
<keyword id="KW-0678">Repressor</keyword>
<keyword id="KW-0694">RNA-binding</keyword>
<keyword id="KW-0804">Transcription</keyword>
<keyword id="KW-0805">Transcription regulation</keyword>
<reference key="1">
    <citation type="journal article" date="1994" name="Nature">
        <title>2.2 Mb of contiguous nucleotide sequence from chromosome III of C. elegans.</title>
        <authorList>
            <person name="Wilson R."/>
            <person name="Ainscough R."/>
            <person name="Anderson K."/>
            <person name="Baynes C."/>
            <person name="Berks M."/>
            <person name="Bonfield J."/>
            <person name="Burton J."/>
            <person name="Connell M."/>
            <person name="Copsey T."/>
            <person name="Cooper J."/>
            <person name="Coulson A."/>
            <person name="Craxton M."/>
            <person name="Dear S."/>
            <person name="Du Z."/>
            <person name="Durbin R."/>
            <person name="Favello A."/>
            <person name="Fraser A."/>
            <person name="Fulton L."/>
            <person name="Gardner A."/>
            <person name="Green P."/>
            <person name="Hawkins T."/>
            <person name="Hillier L."/>
            <person name="Jier M."/>
            <person name="Johnston L."/>
            <person name="Jones M."/>
            <person name="Kershaw J."/>
            <person name="Kirsten J."/>
            <person name="Laisster N."/>
            <person name="Latreille P."/>
            <person name="Lightning J."/>
            <person name="Lloyd C."/>
            <person name="Mortimore B."/>
            <person name="O'Callaghan M."/>
            <person name="Parsons J."/>
            <person name="Percy C."/>
            <person name="Rifken L."/>
            <person name="Roopra A."/>
            <person name="Saunders D."/>
            <person name="Shownkeen R."/>
            <person name="Sims M."/>
            <person name="Smaldon N."/>
            <person name="Smith A."/>
            <person name="Smith M."/>
            <person name="Sonnhammer E."/>
            <person name="Staden R."/>
            <person name="Sulston J."/>
            <person name="Thierry-Mieg J."/>
            <person name="Thomas K."/>
            <person name="Vaudin M."/>
            <person name="Vaughan K."/>
            <person name="Waterston R."/>
            <person name="Watson A."/>
            <person name="Weinstock L."/>
            <person name="Wilkinson-Sproat J."/>
            <person name="Wohldman P."/>
        </authorList>
    </citation>
    <scope>NUCLEOTIDE SEQUENCE [LARGE SCALE GENOMIC DNA]</scope>
    <source>
        <strain>Bristol N2</strain>
    </source>
</reference>
<reference key="2">
    <citation type="journal article" date="1998" name="Science">
        <title>Genome sequence of the nematode C. elegans: a platform for investigating biology.</title>
        <authorList>
            <consortium name="The C. elegans sequencing consortium"/>
        </authorList>
    </citation>
    <scope>NUCLEOTIDE SEQUENCE [LARGE SCALE GENOMIC DNA]</scope>
    <scope>ALTERNATIVE SPLICING</scope>
    <source>
        <strain>Bristol N2</strain>
    </source>
</reference>
<reference key="3">
    <citation type="journal article" date="2006" name="Development">
        <title>RNA-binding proteins SOP-2 and SOR-1 form a novel PcG-like complex in C. elegans.</title>
        <authorList>
            <person name="Zhang T."/>
            <person name="Sun Y."/>
            <person name="Tian E."/>
            <person name="Deng H."/>
            <person name="Zhang Y."/>
            <person name="Luo X."/>
            <person name="Cai Q."/>
            <person name="Wang H."/>
            <person name="Chai J."/>
            <person name="Zhang H."/>
        </authorList>
    </citation>
    <scope>FUNCTION</scope>
    <scope>INTERACTION WITH SOP-2</scope>
    <scope>SUBCELLULAR LOCATION</scope>
    <scope>DEVELOPMENTAL STAGE</scope>
    <scope>DISRUPTION PHENOTYPE</scope>
</reference>
<proteinExistence type="evidence at protein level"/>
<sequence>MTINIKYSSKFSSSKTSSSEELKPKTYIPAYYQPPVSMPKYYVNWLRIKLSLNKLKNIRAIYLFDQCQNFNQYQESSRKFSAGQVSSLTPWYSNFSNYSTVILRMKDTSLPPLENPSNGGTYLFNLITVFPSIALSFNYSWRGDTGPSISIFSFSLSVLFFSLFPQHKNICARAWCRPFRRSLSFSLRFIMSSEPASSSTEKVPEEPHPHSIKHKFQGPQFVIPRALSDYVLNVNNQTPESYEKALNAKYGRDDYITLCLHVTSLCTEYGPLDDGPEYVLLCDSRARVDKLIEDLVKLLEIDTDYVQLELHGGKRLHLQKPDAVLRDIAYKQSNEGSDKFFLEMKLVPSESMKAKIMKQEEEEEKARKHGQYQQYQEYHQQHQAMNDGQSSSSVPSTSSPSCSSEANRKEMETVREPAGPSELMRAINAPVAPAPVVIKIETPVALPEEDETLMDDDEMPSLTVEAPSEEASFEAEQPSPQVPQASIEGPSQQQQIPGTSQQKRQVARGSRTNMISYHDLPPGTGNAPPMACPQVTLKLEKNVPFEAKIRAVAGYTRKPISEVQKMRPSDLESIFHSICIASVQRIKRRNELVQQLQEINAQSCKSPTMTMNKKFTLAKAYQRVQNEIEKIDREQILPQQYMNMPPMPPQGQQRLPPPAYPPGILPPQQNRQQGVPPQFQRSPQFMIGPDGQRYAHPYMQLPNSNQRARILNTSSVQPSEEVRNRLVKIEAMAMNMAQLNPPRPPPPQPPHRALQGELQFLRPGAPDPCNFRPDSKQTYNNTYVTVASPATLTNSIIPWHFPPYEKSGRLNVSNTIKAINEYRLLCNSRQADPASFLEFYFLGDPMPHFNKILSIADYNMYLSRRRCDEADVKIHRMSHSDQLQLYLLELQSDESNVEKWKTFYRIMQWDLPLNNEFPRILLPSSLDIGRPVVDRKKKSIDQVMNHIHRMHSQRPPSMGNSSTSSEASSTSPTNAATATSSPASNRPTTSTAQPPTLNPT</sequence>
<accession>P34619</accession>
<accession>Q1NZ36</accession>
<protein>
    <recommendedName>
        <fullName>Sop-2-related protein 1</fullName>
    </recommendedName>
</protein>
<comment type="function">
    <text evidence="2">Acts synergistically with sop-2 to maintain the transcriptionally repressive state of homeotic genes throughout development. Not required to initiate repression, but to maintain it during later stages of development. Also required to repress expression of other genes. Binds RNA in a sequence-independent manner.</text>
</comment>
<comment type="subunit">
    <text>Binds through its N-terminal region to the N-terminal region of sop-2.</text>
</comment>
<comment type="interaction">
    <interactant intactId="EBI-326963">
        <id>P34619</id>
    </interactant>
    <interactant intactId="EBI-331594">
        <id>Q965H3</id>
        <label>sop-2</label>
    </interactant>
    <organismsDiffer>false</organismsDiffer>
    <experiments>4</experiments>
</comment>
<comment type="subcellular location">
    <subcellularLocation>
        <location evidence="2">Nucleus</location>
    </subcellularLocation>
    <text>Forms subnuclear bodies. Sop-2 is required for nuclear localization.</text>
</comment>
<comment type="alternative products">
    <event type="alternative splicing"/>
    <isoform>
        <id>P34619-1</id>
        <name>a</name>
        <sequence type="displayed"/>
    </isoform>
    <isoform>
        <id>P34619-2</id>
        <name>b</name>
        <sequence type="described" ref="VSP_020783"/>
    </isoform>
</comment>
<comment type="developmental stage">
    <text evidence="2">Expressed at all developmental stages with levels declining as development proceeds.</text>
</comment>
<comment type="disruption phenotype">
    <text evidence="2">Worms exhibit early larval lethality and anterior to posterior cell fate transformation in a Hox gene-dependent manner. Hermaphrodites show vulva defects, partial hermaphrodite-to-male sexual transformation and are sterile.</text>
</comment>
<gene>
    <name type="primary">sor-1</name>
    <name type="ORF">ZK1236.3</name>
</gene>
<evidence type="ECO:0000256" key="1">
    <source>
        <dbReference type="SAM" id="MobiDB-lite"/>
    </source>
</evidence>
<evidence type="ECO:0000269" key="2">
    <source>
    </source>
</evidence>
<evidence type="ECO:0000305" key="3"/>
<name>SOR1_CAEEL</name>
<organism>
    <name type="scientific">Caenorhabditis elegans</name>
    <dbReference type="NCBI Taxonomy" id="6239"/>
    <lineage>
        <taxon>Eukaryota</taxon>
        <taxon>Metazoa</taxon>
        <taxon>Ecdysozoa</taxon>
        <taxon>Nematoda</taxon>
        <taxon>Chromadorea</taxon>
        <taxon>Rhabditida</taxon>
        <taxon>Rhabditina</taxon>
        <taxon>Rhabditomorpha</taxon>
        <taxon>Rhabditoidea</taxon>
        <taxon>Rhabditidae</taxon>
        <taxon>Peloderinae</taxon>
        <taxon>Caenorhabditis</taxon>
    </lineage>
</organism>